<sequence length="341" mass="37213">MKALSKLKAEEGIWMTDVPEPEVGHNDLLIKIRKTAICGTDVHIYNWDDWSQKTIPVPMVVGHEYVGEVVGIGQEVKGFKIGDRVSGEGHITCGHCRNCRGGRTHLCRNTTGVGVNRPGCFAEYLVIPAFNAFKIPDNISDDLASIFDPFGNAVHTALSFDLVGEDVLVSGAGPIGVMAAAVAKHVGARHVVITDVNEYRLELARKMGVTRAVNVAKESLNDVMAELGMTEGFDVGLEMSGAPPAFRTMLDTMNHGGRIAMLGIPPSDMSIDWTKVIFKGLFIKGIYGREMFETWYKMAALIQSGLDLSPIITHRFSIDDFQKGFDAMRSGQSGKVILSWD</sequence>
<dbReference type="EC" id="1.1.1.103" evidence="1"/>
<dbReference type="EMBL" id="CP000026">
    <property type="protein sequence ID" value="AAV79361.1"/>
    <property type="molecule type" value="Genomic_DNA"/>
</dbReference>
<dbReference type="RefSeq" id="WP_000645990.1">
    <property type="nucleotide sequence ID" value="NC_006511.1"/>
</dbReference>
<dbReference type="SMR" id="Q5PC07"/>
<dbReference type="KEGG" id="spt:SPA3560"/>
<dbReference type="HOGENOM" id="CLU_026673_11_0_6"/>
<dbReference type="UniPathway" id="UPA00046">
    <property type="reaction ID" value="UER00505"/>
</dbReference>
<dbReference type="Proteomes" id="UP000008185">
    <property type="component" value="Chromosome"/>
</dbReference>
<dbReference type="GO" id="GO:0005737">
    <property type="term" value="C:cytoplasm"/>
    <property type="evidence" value="ECO:0007669"/>
    <property type="project" value="UniProtKB-SubCell"/>
</dbReference>
<dbReference type="GO" id="GO:0008743">
    <property type="term" value="F:L-threonine 3-dehydrogenase activity"/>
    <property type="evidence" value="ECO:0007669"/>
    <property type="project" value="UniProtKB-UniRule"/>
</dbReference>
<dbReference type="GO" id="GO:0008270">
    <property type="term" value="F:zinc ion binding"/>
    <property type="evidence" value="ECO:0007669"/>
    <property type="project" value="UniProtKB-UniRule"/>
</dbReference>
<dbReference type="GO" id="GO:0019518">
    <property type="term" value="P:L-threonine catabolic process to glycine"/>
    <property type="evidence" value="ECO:0007669"/>
    <property type="project" value="UniProtKB-UniPathway"/>
</dbReference>
<dbReference type="FunFam" id="3.40.50.720:FF:000059">
    <property type="entry name" value="L-threonine 3-dehydrogenase"/>
    <property type="match status" value="1"/>
</dbReference>
<dbReference type="Gene3D" id="3.90.180.10">
    <property type="entry name" value="Medium-chain alcohol dehydrogenases, catalytic domain"/>
    <property type="match status" value="1"/>
</dbReference>
<dbReference type="Gene3D" id="3.40.50.720">
    <property type="entry name" value="NAD(P)-binding Rossmann-like Domain"/>
    <property type="match status" value="1"/>
</dbReference>
<dbReference type="HAMAP" id="MF_00627">
    <property type="entry name" value="Thr_dehydrog"/>
    <property type="match status" value="1"/>
</dbReference>
<dbReference type="InterPro" id="IPR013149">
    <property type="entry name" value="ADH-like_C"/>
</dbReference>
<dbReference type="InterPro" id="IPR013154">
    <property type="entry name" value="ADH-like_N"/>
</dbReference>
<dbReference type="InterPro" id="IPR002328">
    <property type="entry name" value="ADH_Zn_CS"/>
</dbReference>
<dbReference type="InterPro" id="IPR011032">
    <property type="entry name" value="GroES-like_sf"/>
</dbReference>
<dbReference type="InterPro" id="IPR004627">
    <property type="entry name" value="L-Threonine_3-DHase"/>
</dbReference>
<dbReference type="InterPro" id="IPR036291">
    <property type="entry name" value="NAD(P)-bd_dom_sf"/>
</dbReference>
<dbReference type="InterPro" id="IPR020843">
    <property type="entry name" value="PKS_ER"/>
</dbReference>
<dbReference type="InterPro" id="IPR050129">
    <property type="entry name" value="Zn_alcohol_dh"/>
</dbReference>
<dbReference type="NCBIfam" id="NF003808">
    <property type="entry name" value="PRK05396.1"/>
    <property type="match status" value="1"/>
</dbReference>
<dbReference type="NCBIfam" id="TIGR00692">
    <property type="entry name" value="tdh"/>
    <property type="match status" value="1"/>
</dbReference>
<dbReference type="PANTHER" id="PTHR43401">
    <property type="entry name" value="L-THREONINE 3-DEHYDROGENASE"/>
    <property type="match status" value="1"/>
</dbReference>
<dbReference type="PANTHER" id="PTHR43401:SF2">
    <property type="entry name" value="L-THREONINE 3-DEHYDROGENASE"/>
    <property type="match status" value="1"/>
</dbReference>
<dbReference type="Pfam" id="PF08240">
    <property type="entry name" value="ADH_N"/>
    <property type="match status" value="1"/>
</dbReference>
<dbReference type="Pfam" id="PF00107">
    <property type="entry name" value="ADH_zinc_N"/>
    <property type="match status" value="1"/>
</dbReference>
<dbReference type="SMART" id="SM00829">
    <property type="entry name" value="PKS_ER"/>
    <property type="match status" value="1"/>
</dbReference>
<dbReference type="SUPFAM" id="SSF50129">
    <property type="entry name" value="GroES-like"/>
    <property type="match status" value="1"/>
</dbReference>
<dbReference type="SUPFAM" id="SSF51735">
    <property type="entry name" value="NAD(P)-binding Rossmann-fold domains"/>
    <property type="match status" value="1"/>
</dbReference>
<dbReference type="PROSITE" id="PS00059">
    <property type="entry name" value="ADH_ZINC"/>
    <property type="match status" value="1"/>
</dbReference>
<feature type="chain" id="PRO_0000160853" description="L-threonine 3-dehydrogenase">
    <location>
        <begin position="1"/>
        <end position="341"/>
    </location>
</feature>
<feature type="active site" description="Charge relay system" evidence="1">
    <location>
        <position position="40"/>
    </location>
</feature>
<feature type="active site" description="Charge relay system" evidence="1">
    <location>
        <position position="43"/>
    </location>
</feature>
<feature type="binding site" evidence="1">
    <location>
        <position position="38"/>
    </location>
    <ligand>
        <name>Zn(2+)</name>
        <dbReference type="ChEBI" id="CHEBI:29105"/>
        <label>1</label>
        <note>catalytic</note>
    </ligand>
</feature>
<feature type="binding site" evidence="1">
    <location>
        <position position="63"/>
    </location>
    <ligand>
        <name>Zn(2+)</name>
        <dbReference type="ChEBI" id="CHEBI:29105"/>
        <label>1</label>
        <note>catalytic</note>
    </ligand>
</feature>
<feature type="binding site" evidence="1">
    <location>
        <position position="64"/>
    </location>
    <ligand>
        <name>Zn(2+)</name>
        <dbReference type="ChEBI" id="CHEBI:29105"/>
        <label>1</label>
        <note>catalytic</note>
    </ligand>
</feature>
<feature type="binding site" evidence="1">
    <location>
        <position position="93"/>
    </location>
    <ligand>
        <name>Zn(2+)</name>
        <dbReference type="ChEBI" id="CHEBI:29105"/>
        <label>2</label>
    </ligand>
</feature>
<feature type="binding site" evidence="1">
    <location>
        <position position="96"/>
    </location>
    <ligand>
        <name>Zn(2+)</name>
        <dbReference type="ChEBI" id="CHEBI:29105"/>
        <label>2</label>
    </ligand>
</feature>
<feature type="binding site" evidence="1">
    <location>
        <position position="99"/>
    </location>
    <ligand>
        <name>Zn(2+)</name>
        <dbReference type="ChEBI" id="CHEBI:29105"/>
        <label>2</label>
    </ligand>
</feature>
<feature type="binding site" evidence="1">
    <location>
        <position position="107"/>
    </location>
    <ligand>
        <name>Zn(2+)</name>
        <dbReference type="ChEBI" id="CHEBI:29105"/>
        <label>2</label>
    </ligand>
</feature>
<feature type="binding site" evidence="1">
    <location>
        <position position="175"/>
    </location>
    <ligand>
        <name>NAD(+)</name>
        <dbReference type="ChEBI" id="CHEBI:57540"/>
    </ligand>
</feature>
<feature type="binding site" evidence="1">
    <location>
        <position position="195"/>
    </location>
    <ligand>
        <name>NAD(+)</name>
        <dbReference type="ChEBI" id="CHEBI:57540"/>
    </ligand>
</feature>
<feature type="binding site" evidence="1">
    <location>
        <position position="200"/>
    </location>
    <ligand>
        <name>NAD(+)</name>
        <dbReference type="ChEBI" id="CHEBI:57540"/>
    </ligand>
</feature>
<feature type="binding site" evidence="1">
    <location>
        <begin position="262"/>
        <end position="264"/>
    </location>
    <ligand>
        <name>NAD(+)</name>
        <dbReference type="ChEBI" id="CHEBI:57540"/>
    </ligand>
</feature>
<feature type="binding site" evidence="1">
    <location>
        <begin position="286"/>
        <end position="287"/>
    </location>
    <ligand>
        <name>NAD(+)</name>
        <dbReference type="ChEBI" id="CHEBI:57540"/>
    </ligand>
</feature>
<feature type="site" description="Important for catalytic activity for the proton relay mechanism but does not participate directly in the coordination of zinc atom" evidence="1">
    <location>
        <position position="148"/>
    </location>
</feature>
<keyword id="KW-0963">Cytoplasm</keyword>
<keyword id="KW-0479">Metal-binding</keyword>
<keyword id="KW-0520">NAD</keyword>
<keyword id="KW-0560">Oxidoreductase</keyword>
<keyword id="KW-0862">Zinc</keyword>
<accession>Q5PC07</accession>
<evidence type="ECO:0000255" key="1">
    <source>
        <dbReference type="HAMAP-Rule" id="MF_00627"/>
    </source>
</evidence>
<name>TDH_SALPA</name>
<gene>
    <name evidence="1" type="primary">tdh</name>
    <name type="ordered locus">SPA3560</name>
</gene>
<reference key="1">
    <citation type="journal article" date="2004" name="Nat. Genet.">
        <title>Comparison of genome degradation in Paratyphi A and Typhi, human-restricted serovars of Salmonella enterica that cause typhoid.</title>
        <authorList>
            <person name="McClelland M."/>
            <person name="Sanderson K.E."/>
            <person name="Clifton S.W."/>
            <person name="Latreille P."/>
            <person name="Porwollik S."/>
            <person name="Sabo A."/>
            <person name="Meyer R."/>
            <person name="Bieri T."/>
            <person name="Ozersky P."/>
            <person name="McLellan M."/>
            <person name="Harkins C.R."/>
            <person name="Wang C."/>
            <person name="Nguyen C."/>
            <person name="Berghoff A."/>
            <person name="Elliott G."/>
            <person name="Kohlberg S."/>
            <person name="Strong C."/>
            <person name="Du F."/>
            <person name="Carter J."/>
            <person name="Kremizki C."/>
            <person name="Layman D."/>
            <person name="Leonard S."/>
            <person name="Sun H."/>
            <person name="Fulton L."/>
            <person name="Nash W."/>
            <person name="Miner T."/>
            <person name="Minx P."/>
            <person name="Delehaunty K."/>
            <person name="Fronick C."/>
            <person name="Magrini V."/>
            <person name="Nhan M."/>
            <person name="Warren W."/>
            <person name="Florea L."/>
            <person name="Spieth J."/>
            <person name="Wilson R.K."/>
        </authorList>
    </citation>
    <scope>NUCLEOTIDE SEQUENCE [LARGE SCALE GENOMIC DNA]</scope>
    <source>
        <strain>ATCC 9150 / SARB42</strain>
    </source>
</reference>
<protein>
    <recommendedName>
        <fullName evidence="1">L-threonine 3-dehydrogenase</fullName>
        <shortName evidence="1">TDH</shortName>
        <ecNumber evidence="1">1.1.1.103</ecNumber>
    </recommendedName>
</protein>
<proteinExistence type="inferred from homology"/>
<comment type="function">
    <text evidence="1">Catalyzes the NAD(+)-dependent oxidation of L-threonine to 2-amino-3-ketobutyrate.</text>
</comment>
<comment type="catalytic activity">
    <reaction evidence="1">
        <text>L-threonine + NAD(+) = (2S)-2-amino-3-oxobutanoate + NADH + H(+)</text>
        <dbReference type="Rhea" id="RHEA:13161"/>
        <dbReference type="ChEBI" id="CHEBI:15378"/>
        <dbReference type="ChEBI" id="CHEBI:57540"/>
        <dbReference type="ChEBI" id="CHEBI:57926"/>
        <dbReference type="ChEBI" id="CHEBI:57945"/>
        <dbReference type="ChEBI" id="CHEBI:78948"/>
        <dbReference type="EC" id="1.1.1.103"/>
    </reaction>
</comment>
<comment type="cofactor">
    <cofactor evidence="1">
        <name>Zn(2+)</name>
        <dbReference type="ChEBI" id="CHEBI:29105"/>
    </cofactor>
    <text evidence="1">Binds 2 Zn(2+) ions per subunit.</text>
</comment>
<comment type="pathway">
    <text evidence="1">Amino-acid degradation; L-threonine degradation via oxydo-reductase pathway; glycine from L-threonine: step 1/2.</text>
</comment>
<comment type="subunit">
    <text evidence="1">Homotetramer.</text>
</comment>
<comment type="subcellular location">
    <subcellularLocation>
        <location evidence="1">Cytoplasm</location>
    </subcellularLocation>
</comment>
<comment type="similarity">
    <text evidence="1">Belongs to the zinc-containing alcohol dehydrogenase family.</text>
</comment>
<organism>
    <name type="scientific">Salmonella paratyphi A (strain ATCC 9150 / SARB42)</name>
    <dbReference type="NCBI Taxonomy" id="295319"/>
    <lineage>
        <taxon>Bacteria</taxon>
        <taxon>Pseudomonadati</taxon>
        <taxon>Pseudomonadota</taxon>
        <taxon>Gammaproteobacteria</taxon>
        <taxon>Enterobacterales</taxon>
        <taxon>Enterobacteriaceae</taxon>
        <taxon>Salmonella</taxon>
    </lineage>
</organism>